<organism>
    <name type="scientific">Streptococcus sanguinis (strain SK36)</name>
    <dbReference type="NCBI Taxonomy" id="388919"/>
    <lineage>
        <taxon>Bacteria</taxon>
        <taxon>Bacillati</taxon>
        <taxon>Bacillota</taxon>
        <taxon>Bacilli</taxon>
        <taxon>Lactobacillales</taxon>
        <taxon>Streptococcaceae</taxon>
        <taxon>Streptococcus</taxon>
    </lineage>
</organism>
<evidence type="ECO:0000255" key="1">
    <source>
        <dbReference type="HAMAP-Rule" id="MF_01710"/>
    </source>
</evidence>
<evidence type="ECO:0000305" key="2"/>
<proteinExistence type="inferred from homology"/>
<comment type="function">
    <text evidence="1">ATP-binding (A) component of a common energy-coupling factor (ECF) ABC-transporter complex. Unlike classic ABC transporters this ECF transporter provides the energy necessary to transport a number of different substrates.</text>
</comment>
<comment type="subunit">
    <text evidence="1">Forms a stable energy-coupling factor (ECF) transporter complex composed of 2 membrane-embedded substrate-binding proteins (S component), 2 ATP-binding proteins (A component) and 2 transmembrane proteins (T component).</text>
</comment>
<comment type="subcellular location">
    <subcellularLocation>
        <location evidence="1">Cell membrane</location>
        <topology evidence="1">Peripheral membrane protein</topology>
    </subcellularLocation>
</comment>
<comment type="similarity">
    <text evidence="1">Belongs to the ABC transporter superfamily. Energy-coupling factor EcfA family.</text>
</comment>
<comment type="sequence caution" evidence="2">
    <conflict type="erroneous initiation">
        <sequence resource="EMBL-CDS" id="ABN45724"/>
    </conflict>
    <text>Extended N-terminus.</text>
</comment>
<gene>
    <name evidence="1" type="primary">ecfA1</name>
    <name type="synonym">cbiO1</name>
    <name type="ordered locus">SSA_2367</name>
</gene>
<reference key="1">
    <citation type="journal article" date="2007" name="J. Bacteriol.">
        <title>Genome of the opportunistic pathogen Streptococcus sanguinis.</title>
        <authorList>
            <person name="Xu P."/>
            <person name="Alves J.M."/>
            <person name="Kitten T."/>
            <person name="Brown A."/>
            <person name="Chen Z."/>
            <person name="Ozaki L.S."/>
            <person name="Manque P."/>
            <person name="Ge X."/>
            <person name="Serrano M.G."/>
            <person name="Puiu D."/>
            <person name="Hendricks S."/>
            <person name="Wang Y."/>
            <person name="Chaplin M.D."/>
            <person name="Akan D."/>
            <person name="Paik S."/>
            <person name="Peterson D.L."/>
            <person name="Macrina F.L."/>
            <person name="Buck G.A."/>
        </authorList>
    </citation>
    <scope>NUCLEOTIDE SEQUENCE [LARGE SCALE GENOMIC DNA]</scope>
    <source>
        <strain>SK36</strain>
    </source>
</reference>
<keyword id="KW-0067">ATP-binding</keyword>
<keyword id="KW-1003">Cell membrane</keyword>
<keyword id="KW-0472">Membrane</keyword>
<keyword id="KW-0547">Nucleotide-binding</keyword>
<keyword id="KW-1185">Reference proteome</keyword>
<keyword id="KW-1278">Translocase</keyword>
<keyword id="KW-0813">Transport</keyword>
<accession>A3CRB9</accession>
<feature type="chain" id="PRO_0000288008" description="Energy-coupling factor transporter ATP-binding protein EcfA1">
    <location>
        <begin position="1"/>
        <end position="278"/>
    </location>
</feature>
<feature type="domain" description="ABC transporter" evidence="1">
    <location>
        <begin position="5"/>
        <end position="240"/>
    </location>
</feature>
<feature type="binding site" evidence="1">
    <location>
        <begin position="40"/>
        <end position="47"/>
    </location>
    <ligand>
        <name>ATP</name>
        <dbReference type="ChEBI" id="CHEBI:30616"/>
    </ligand>
</feature>
<sequence>MENIIEVRNLKYKYDSESENYTLNDVSFQVKKGEWLSIVGHNGSGKSTTVRLIDGLLEAESGDIIISGDKLTAENVWEKRRQIGMVFQNPDNQFVGATVEDDVAFGLENQGLDYDLMVERVQQALELVGMQDFKEREPARLSGGQKQRVAVAGVVALRPDIIILDEATSMLDPEGRLDLIQTVKKIKDSNQLTVISITHDLDEIALSDRVLVMKEGQVESTATPRELFSREDLEELGLDQPFVNQVKVALRQSGLSLPDSYLTEKELQDQLWALLSKM</sequence>
<name>ECFA1_STRSV</name>
<dbReference type="EC" id="7.-.-.-" evidence="1"/>
<dbReference type="EMBL" id="CP000387">
    <property type="protein sequence ID" value="ABN45724.1"/>
    <property type="status" value="ALT_INIT"/>
    <property type="molecule type" value="Genomic_DNA"/>
</dbReference>
<dbReference type="RefSeq" id="WP_033179246.1">
    <property type="nucleotide sequence ID" value="NC_009009.1"/>
</dbReference>
<dbReference type="RefSeq" id="YP_001036274.1">
    <property type="nucleotide sequence ID" value="NC_009009.1"/>
</dbReference>
<dbReference type="SMR" id="A3CRB9"/>
<dbReference type="STRING" id="388919.SSA_2367"/>
<dbReference type="KEGG" id="ssa:SSA_2367"/>
<dbReference type="PATRIC" id="fig|388919.9.peg.2248"/>
<dbReference type="eggNOG" id="COG1122">
    <property type="taxonomic scope" value="Bacteria"/>
</dbReference>
<dbReference type="HOGENOM" id="CLU_000604_1_22_9"/>
<dbReference type="OrthoDB" id="9784332at2"/>
<dbReference type="Proteomes" id="UP000002148">
    <property type="component" value="Chromosome"/>
</dbReference>
<dbReference type="GO" id="GO:0043190">
    <property type="term" value="C:ATP-binding cassette (ABC) transporter complex"/>
    <property type="evidence" value="ECO:0007669"/>
    <property type="project" value="TreeGrafter"/>
</dbReference>
<dbReference type="GO" id="GO:0005524">
    <property type="term" value="F:ATP binding"/>
    <property type="evidence" value="ECO:0007669"/>
    <property type="project" value="UniProtKB-KW"/>
</dbReference>
<dbReference type="GO" id="GO:0016887">
    <property type="term" value="F:ATP hydrolysis activity"/>
    <property type="evidence" value="ECO:0007669"/>
    <property type="project" value="InterPro"/>
</dbReference>
<dbReference type="GO" id="GO:0042626">
    <property type="term" value="F:ATPase-coupled transmembrane transporter activity"/>
    <property type="evidence" value="ECO:0007669"/>
    <property type="project" value="TreeGrafter"/>
</dbReference>
<dbReference type="CDD" id="cd03225">
    <property type="entry name" value="ABC_cobalt_CbiO_domain1"/>
    <property type="match status" value="1"/>
</dbReference>
<dbReference type="FunFam" id="3.40.50.300:FF:000224">
    <property type="entry name" value="Energy-coupling factor transporter ATP-binding protein EcfA"/>
    <property type="match status" value="1"/>
</dbReference>
<dbReference type="Gene3D" id="3.40.50.300">
    <property type="entry name" value="P-loop containing nucleotide triphosphate hydrolases"/>
    <property type="match status" value="1"/>
</dbReference>
<dbReference type="InterPro" id="IPR003593">
    <property type="entry name" value="AAA+_ATPase"/>
</dbReference>
<dbReference type="InterPro" id="IPR003439">
    <property type="entry name" value="ABC_transporter-like_ATP-bd"/>
</dbReference>
<dbReference type="InterPro" id="IPR017871">
    <property type="entry name" value="ABC_transporter-like_CS"/>
</dbReference>
<dbReference type="InterPro" id="IPR015856">
    <property type="entry name" value="ABC_transpr_CbiO/EcfA_su"/>
</dbReference>
<dbReference type="InterPro" id="IPR050095">
    <property type="entry name" value="ECF_ABC_transporter_ATP-bd"/>
</dbReference>
<dbReference type="InterPro" id="IPR030947">
    <property type="entry name" value="EcfA_1"/>
</dbReference>
<dbReference type="InterPro" id="IPR027417">
    <property type="entry name" value="P-loop_NTPase"/>
</dbReference>
<dbReference type="NCBIfam" id="TIGR04520">
    <property type="entry name" value="ECF_ATPase_1"/>
    <property type="match status" value="1"/>
</dbReference>
<dbReference type="NCBIfam" id="NF010156">
    <property type="entry name" value="PRK13635.1"/>
    <property type="match status" value="1"/>
</dbReference>
<dbReference type="NCBIfam" id="NF010167">
    <property type="entry name" value="PRK13648.1"/>
    <property type="match status" value="1"/>
</dbReference>
<dbReference type="PANTHER" id="PTHR43553:SF24">
    <property type="entry name" value="ENERGY-COUPLING FACTOR TRANSPORTER ATP-BINDING PROTEIN ECFA1"/>
    <property type="match status" value="1"/>
</dbReference>
<dbReference type="PANTHER" id="PTHR43553">
    <property type="entry name" value="HEAVY METAL TRANSPORTER"/>
    <property type="match status" value="1"/>
</dbReference>
<dbReference type="Pfam" id="PF00005">
    <property type="entry name" value="ABC_tran"/>
    <property type="match status" value="1"/>
</dbReference>
<dbReference type="SMART" id="SM00382">
    <property type="entry name" value="AAA"/>
    <property type="match status" value="1"/>
</dbReference>
<dbReference type="SUPFAM" id="SSF52540">
    <property type="entry name" value="P-loop containing nucleoside triphosphate hydrolases"/>
    <property type="match status" value="1"/>
</dbReference>
<dbReference type="PROSITE" id="PS00211">
    <property type="entry name" value="ABC_TRANSPORTER_1"/>
    <property type="match status" value="1"/>
</dbReference>
<dbReference type="PROSITE" id="PS50893">
    <property type="entry name" value="ABC_TRANSPORTER_2"/>
    <property type="match status" value="1"/>
</dbReference>
<dbReference type="PROSITE" id="PS51246">
    <property type="entry name" value="CBIO"/>
    <property type="match status" value="1"/>
</dbReference>
<protein>
    <recommendedName>
        <fullName evidence="1">Energy-coupling factor transporter ATP-binding protein EcfA1</fullName>
        <shortName evidence="1">ECF transporter A component EcfA1</shortName>
        <ecNumber evidence="1">7.-.-.-</ecNumber>
    </recommendedName>
</protein>